<reference key="1">
    <citation type="journal article" date="2005" name="DNA Res.">
        <title>Complete genome sequence of the facultative anaerobic magnetotactic bacterium Magnetospirillum sp. strain AMB-1.</title>
        <authorList>
            <person name="Matsunaga T."/>
            <person name="Okamura Y."/>
            <person name="Fukuda Y."/>
            <person name="Wahyudi A.T."/>
            <person name="Murase Y."/>
            <person name="Takeyama H."/>
        </authorList>
    </citation>
    <scope>NUCLEOTIDE SEQUENCE [LARGE SCALE GENOMIC DNA]</scope>
    <source>
        <strain>ATCC 700264 / AMB-1</strain>
    </source>
</reference>
<evidence type="ECO:0000255" key="1">
    <source>
        <dbReference type="HAMAP-Rule" id="MF_01322"/>
    </source>
</evidence>
<evidence type="ECO:0000256" key="2">
    <source>
        <dbReference type="SAM" id="MobiDB-lite"/>
    </source>
</evidence>
<dbReference type="EC" id="2.7.7.6" evidence="1"/>
<dbReference type="EMBL" id="AP007255">
    <property type="protein sequence ID" value="BAE51943.1"/>
    <property type="molecule type" value="Genomic_DNA"/>
</dbReference>
<dbReference type="RefSeq" id="WP_011385505.1">
    <property type="nucleotide sequence ID" value="NC_007626.1"/>
</dbReference>
<dbReference type="SMR" id="Q2W2I2"/>
<dbReference type="STRING" id="342108.amb3139"/>
<dbReference type="KEGG" id="mag:amb3139"/>
<dbReference type="HOGENOM" id="CLU_000524_3_1_5"/>
<dbReference type="OrthoDB" id="9815296at2"/>
<dbReference type="Proteomes" id="UP000007058">
    <property type="component" value="Chromosome"/>
</dbReference>
<dbReference type="GO" id="GO:0000428">
    <property type="term" value="C:DNA-directed RNA polymerase complex"/>
    <property type="evidence" value="ECO:0007669"/>
    <property type="project" value="UniProtKB-KW"/>
</dbReference>
<dbReference type="GO" id="GO:0003677">
    <property type="term" value="F:DNA binding"/>
    <property type="evidence" value="ECO:0007669"/>
    <property type="project" value="UniProtKB-UniRule"/>
</dbReference>
<dbReference type="GO" id="GO:0003899">
    <property type="term" value="F:DNA-directed RNA polymerase activity"/>
    <property type="evidence" value="ECO:0007669"/>
    <property type="project" value="UniProtKB-UniRule"/>
</dbReference>
<dbReference type="GO" id="GO:0000287">
    <property type="term" value="F:magnesium ion binding"/>
    <property type="evidence" value="ECO:0007669"/>
    <property type="project" value="UniProtKB-UniRule"/>
</dbReference>
<dbReference type="GO" id="GO:0008270">
    <property type="term" value="F:zinc ion binding"/>
    <property type="evidence" value="ECO:0007669"/>
    <property type="project" value="UniProtKB-UniRule"/>
</dbReference>
<dbReference type="GO" id="GO:0006351">
    <property type="term" value="P:DNA-templated transcription"/>
    <property type="evidence" value="ECO:0007669"/>
    <property type="project" value="UniProtKB-UniRule"/>
</dbReference>
<dbReference type="CDD" id="cd02655">
    <property type="entry name" value="RNAP_beta'_C"/>
    <property type="match status" value="1"/>
</dbReference>
<dbReference type="CDD" id="cd01609">
    <property type="entry name" value="RNAP_beta'_N"/>
    <property type="match status" value="1"/>
</dbReference>
<dbReference type="FunFam" id="1.10.40.90:FF:000001">
    <property type="entry name" value="DNA-directed RNA polymerase subunit beta"/>
    <property type="match status" value="1"/>
</dbReference>
<dbReference type="FunFam" id="4.10.860.120:FF:000001">
    <property type="entry name" value="DNA-directed RNA polymerase subunit beta"/>
    <property type="match status" value="1"/>
</dbReference>
<dbReference type="Gene3D" id="1.10.132.30">
    <property type="match status" value="1"/>
</dbReference>
<dbReference type="Gene3D" id="1.10.150.390">
    <property type="match status" value="1"/>
</dbReference>
<dbReference type="Gene3D" id="1.10.1790.20">
    <property type="match status" value="1"/>
</dbReference>
<dbReference type="Gene3D" id="1.10.40.90">
    <property type="match status" value="1"/>
</dbReference>
<dbReference type="Gene3D" id="2.40.40.20">
    <property type="match status" value="1"/>
</dbReference>
<dbReference type="Gene3D" id="2.40.50.100">
    <property type="match status" value="3"/>
</dbReference>
<dbReference type="Gene3D" id="4.10.860.120">
    <property type="entry name" value="RNA polymerase II, clamp domain"/>
    <property type="match status" value="1"/>
</dbReference>
<dbReference type="Gene3D" id="1.10.274.100">
    <property type="entry name" value="RNA polymerase Rpb1, domain 3"/>
    <property type="match status" value="1"/>
</dbReference>
<dbReference type="HAMAP" id="MF_01322">
    <property type="entry name" value="RNApol_bact_RpoC"/>
    <property type="match status" value="1"/>
</dbReference>
<dbReference type="InterPro" id="IPR045867">
    <property type="entry name" value="DNA-dir_RpoC_beta_prime"/>
</dbReference>
<dbReference type="InterPro" id="IPR012754">
    <property type="entry name" value="DNA-dir_RpoC_beta_prime_bact"/>
</dbReference>
<dbReference type="InterPro" id="IPR000722">
    <property type="entry name" value="RNA_pol_asu"/>
</dbReference>
<dbReference type="InterPro" id="IPR006592">
    <property type="entry name" value="RNA_pol_N"/>
</dbReference>
<dbReference type="InterPro" id="IPR007080">
    <property type="entry name" value="RNA_pol_Rpb1_1"/>
</dbReference>
<dbReference type="InterPro" id="IPR007066">
    <property type="entry name" value="RNA_pol_Rpb1_3"/>
</dbReference>
<dbReference type="InterPro" id="IPR042102">
    <property type="entry name" value="RNA_pol_Rpb1_3_sf"/>
</dbReference>
<dbReference type="InterPro" id="IPR007083">
    <property type="entry name" value="RNA_pol_Rpb1_4"/>
</dbReference>
<dbReference type="InterPro" id="IPR007081">
    <property type="entry name" value="RNA_pol_Rpb1_5"/>
</dbReference>
<dbReference type="InterPro" id="IPR044893">
    <property type="entry name" value="RNA_pol_Rpb1_clamp_domain"/>
</dbReference>
<dbReference type="InterPro" id="IPR038120">
    <property type="entry name" value="Rpb1_funnel_sf"/>
</dbReference>
<dbReference type="PANTHER" id="PTHR19376">
    <property type="entry name" value="DNA-DIRECTED RNA POLYMERASE"/>
    <property type="match status" value="1"/>
</dbReference>
<dbReference type="PANTHER" id="PTHR19376:SF54">
    <property type="entry name" value="DNA-DIRECTED RNA POLYMERASE SUBUNIT BETA"/>
    <property type="match status" value="1"/>
</dbReference>
<dbReference type="Pfam" id="PF04997">
    <property type="entry name" value="RNA_pol_Rpb1_1"/>
    <property type="match status" value="1"/>
</dbReference>
<dbReference type="Pfam" id="PF00623">
    <property type="entry name" value="RNA_pol_Rpb1_2"/>
    <property type="match status" value="2"/>
</dbReference>
<dbReference type="Pfam" id="PF04983">
    <property type="entry name" value="RNA_pol_Rpb1_3"/>
    <property type="match status" value="2"/>
</dbReference>
<dbReference type="Pfam" id="PF05000">
    <property type="entry name" value="RNA_pol_Rpb1_4"/>
    <property type="match status" value="1"/>
</dbReference>
<dbReference type="Pfam" id="PF04998">
    <property type="entry name" value="RNA_pol_Rpb1_5"/>
    <property type="match status" value="1"/>
</dbReference>
<dbReference type="SMART" id="SM00663">
    <property type="entry name" value="RPOLA_N"/>
    <property type="match status" value="1"/>
</dbReference>
<dbReference type="SUPFAM" id="SSF64484">
    <property type="entry name" value="beta and beta-prime subunits of DNA dependent RNA-polymerase"/>
    <property type="match status" value="1"/>
</dbReference>
<name>RPOC_PARM1</name>
<proteinExistence type="inferred from homology"/>
<protein>
    <recommendedName>
        <fullName evidence="1">DNA-directed RNA polymerase subunit beta'</fullName>
        <shortName evidence="1">RNAP subunit beta'</shortName>
        <ecNumber evidence="1">2.7.7.6</ecNumber>
    </recommendedName>
    <alternativeName>
        <fullName evidence="1">RNA polymerase subunit beta'</fullName>
    </alternativeName>
    <alternativeName>
        <fullName evidence="1">Transcriptase subunit beta'</fullName>
    </alternativeName>
</protein>
<accession>Q2W2I2</accession>
<comment type="function">
    <text evidence="1">DNA-dependent RNA polymerase catalyzes the transcription of DNA into RNA using the four ribonucleoside triphosphates as substrates.</text>
</comment>
<comment type="catalytic activity">
    <reaction evidence="1">
        <text>RNA(n) + a ribonucleoside 5'-triphosphate = RNA(n+1) + diphosphate</text>
        <dbReference type="Rhea" id="RHEA:21248"/>
        <dbReference type="Rhea" id="RHEA-COMP:14527"/>
        <dbReference type="Rhea" id="RHEA-COMP:17342"/>
        <dbReference type="ChEBI" id="CHEBI:33019"/>
        <dbReference type="ChEBI" id="CHEBI:61557"/>
        <dbReference type="ChEBI" id="CHEBI:140395"/>
        <dbReference type="EC" id="2.7.7.6"/>
    </reaction>
</comment>
<comment type="cofactor">
    <cofactor evidence="1">
        <name>Mg(2+)</name>
        <dbReference type="ChEBI" id="CHEBI:18420"/>
    </cofactor>
    <text evidence="1">Binds 1 Mg(2+) ion per subunit.</text>
</comment>
<comment type="cofactor">
    <cofactor evidence="1">
        <name>Zn(2+)</name>
        <dbReference type="ChEBI" id="CHEBI:29105"/>
    </cofactor>
    <text evidence="1">Binds 2 Zn(2+) ions per subunit.</text>
</comment>
<comment type="subunit">
    <text evidence="1">The RNAP catalytic core consists of 2 alpha, 1 beta, 1 beta' and 1 omega subunit. When a sigma factor is associated with the core the holoenzyme is formed, which can initiate transcription.</text>
</comment>
<comment type="similarity">
    <text evidence="1">Belongs to the RNA polymerase beta' chain family.</text>
</comment>
<gene>
    <name evidence="1" type="primary">rpoC</name>
    <name type="ordered locus">amb3139</name>
</gene>
<keyword id="KW-0240">DNA-directed RNA polymerase</keyword>
<keyword id="KW-0460">Magnesium</keyword>
<keyword id="KW-0479">Metal-binding</keyword>
<keyword id="KW-0548">Nucleotidyltransferase</keyword>
<keyword id="KW-0804">Transcription</keyword>
<keyword id="KW-0808">Transferase</keyword>
<keyword id="KW-0862">Zinc</keyword>
<sequence length="1496" mass="165697">MNELMKIFGQVSGTQSFDQIRISIASPERIRSWSYGEIKKPETINYRTFKPERDGLFCARIFGPIKDYECLCGKYKRMKYRGIICEKCGVEVTLAKVRRERMGHIELASPVAHIWFLKSLPSRIGLLCDMTLKDLERILYFENYVVVEPGLTPLKIRELLTEEQYMRAVDEYGEDAFTAKIGAEAIRDMLTVIDLETEKAQLKVDLKETTSEAKRKKLVKRMKLVEAFMESGSRPEWMILEVIPVIPPELRPLVPLDGGRFATSDLNDLYRRVINRNNRLKRLIELRAPEIIVRNEKRMLQEAVDALFDNGRRGRAITGANKRPLKSLSDMLKGKQGRFRQNLLGKRVDYSGRSVIVVGPELKLHQCGLPKKMALELFKPFVYSKLELYGMATTIKAAKRMVEKERPEVWDILEEVIREHPVMLNRAPTLHRLGIQAFEPVLIEGKAIQLHPLVCTAFNADFDGDQMAVHVPLSLEAQLEARVLMMSTNNILSPANGKPIIVPSQDIVLGIYYITMERDEVPGQVLKIRSMDELKGAIANNAILFYCPTDPNTKIDTKDLDTLLDRLASRNVTAHRRVNPSSKDALEAGLKGGHLRLFNVEKPGVPLVFADVNDAEKAIKDGKAILFKVPVFVNMAEIEEALTEKTITLHTKIRARFDTVDSEGTPVTQIVDTTPGRMMLSVILPKNKNVPFSLINRLLTKKEIQNVIDVVYRHCGQKETVIFADRVMGLGYSNAFKAGISFGKDDLVIPPEKETLVGETEEKAKEYEQQYQDGLITQGEKYNKVVDAWSKCTDDVADAMMKQISSLVPGKQINSIYMMAHSGARGSAAQMKQLAGMRGLMAKPSGEIIETPIISNFKEGLTVLEYFNSTHGARKGLADTALKTANSGYLTRRLVDVAQDAIICEEDCGTTNGLTVSPVIEGGEVIASLAERILGRSAARDIVNPLTGEVIVKAAQMIQETEVELIDAAGIETVVIRSVLTCDSEEGVCGSCYGRDLARGTRVNVGEAVGVIAAQSIGEPGTQLTMRTFHIGGAAQRGAEQSSIEATFDGTVQVINRNVVVNSSGASIVMSRNCEVALLDINNRERARHRVPYGAKLLVDEAQKVTKGTKLAEWDPYTLPIITERAGVAHYVDLTEGLSMREVVDEATGIASKVVVDWKQQPRGADLRPRVTLRDEKGEELLLANGLEARYFMSVDAILSVENNTKVNAGDVLARIPRESSKTRDITGGLPRVAELFEARKPKDHAIISDCDGRVEFGKDYKSKRRILVVPEEGDAIEYLIPKGKHISVQEGDYVRRGDPLMDGNPVPHDILKVLGVEALAQYLINEIQEVYRLQGVKINDKHIEVIVRQMLQKVEITDPGDTTLLVGEQVDRVEFDIENSKAIREQGRPASGTPVLQGITKASLQTHSFISAASFQETTRVLTEAAVSGKVDSLQGLKENVIVGRLIPAGTGAVMNRLRAIAAKRDKDMQVEGESEVPAIPPVAEGSAPEAPPAE</sequence>
<organism>
    <name type="scientific">Paramagnetospirillum magneticum (strain ATCC 700264 / AMB-1)</name>
    <name type="common">Magnetospirillum magneticum</name>
    <dbReference type="NCBI Taxonomy" id="342108"/>
    <lineage>
        <taxon>Bacteria</taxon>
        <taxon>Pseudomonadati</taxon>
        <taxon>Pseudomonadota</taxon>
        <taxon>Alphaproteobacteria</taxon>
        <taxon>Rhodospirillales</taxon>
        <taxon>Magnetospirillaceae</taxon>
        <taxon>Paramagnetospirillum</taxon>
    </lineage>
</organism>
<feature type="chain" id="PRO_0000240807" description="DNA-directed RNA polymerase subunit beta'">
    <location>
        <begin position="1"/>
        <end position="1496"/>
    </location>
</feature>
<feature type="region of interest" description="Disordered" evidence="2">
    <location>
        <begin position="1467"/>
        <end position="1496"/>
    </location>
</feature>
<feature type="binding site" evidence="1">
    <location>
        <position position="70"/>
    </location>
    <ligand>
        <name>Zn(2+)</name>
        <dbReference type="ChEBI" id="CHEBI:29105"/>
        <label>1</label>
    </ligand>
</feature>
<feature type="binding site" evidence="1">
    <location>
        <position position="72"/>
    </location>
    <ligand>
        <name>Zn(2+)</name>
        <dbReference type="ChEBI" id="CHEBI:29105"/>
        <label>1</label>
    </ligand>
</feature>
<feature type="binding site" evidence="1">
    <location>
        <position position="85"/>
    </location>
    <ligand>
        <name>Zn(2+)</name>
        <dbReference type="ChEBI" id="CHEBI:29105"/>
        <label>1</label>
    </ligand>
</feature>
<feature type="binding site" evidence="1">
    <location>
        <position position="88"/>
    </location>
    <ligand>
        <name>Zn(2+)</name>
        <dbReference type="ChEBI" id="CHEBI:29105"/>
        <label>1</label>
    </ligand>
</feature>
<feature type="binding site" evidence="1">
    <location>
        <position position="461"/>
    </location>
    <ligand>
        <name>Mg(2+)</name>
        <dbReference type="ChEBI" id="CHEBI:18420"/>
    </ligand>
</feature>
<feature type="binding site" evidence="1">
    <location>
        <position position="463"/>
    </location>
    <ligand>
        <name>Mg(2+)</name>
        <dbReference type="ChEBI" id="CHEBI:18420"/>
    </ligand>
</feature>
<feature type="binding site" evidence="1">
    <location>
        <position position="465"/>
    </location>
    <ligand>
        <name>Mg(2+)</name>
        <dbReference type="ChEBI" id="CHEBI:18420"/>
    </ligand>
</feature>
<feature type="binding site" evidence="1">
    <location>
        <position position="908"/>
    </location>
    <ligand>
        <name>Zn(2+)</name>
        <dbReference type="ChEBI" id="CHEBI:29105"/>
        <label>2</label>
    </ligand>
</feature>
<feature type="binding site" evidence="1">
    <location>
        <position position="982"/>
    </location>
    <ligand>
        <name>Zn(2+)</name>
        <dbReference type="ChEBI" id="CHEBI:29105"/>
        <label>2</label>
    </ligand>
</feature>
<feature type="binding site" evidence="1">
    <location>
        <position position="989"/>
    </location>
    <ligand>
        <name>Zn(2+)</name>
        <dbReference type="ChEBI" id="CHEBI:29105"/>
        <label>2</label>
    </ligand>
</feature>
<feature type="binding site" evidence="1">
    <location>
        <position position="992"/>
    </location>
    <ligand>
        <name>Zn(2+)</name>
        <dbReference type="ChEBI" id="CHEBI:29105"/>
        <label>2</label>
    </ligand>
</feature>